<sequence>MGESIMKKAKEDAPSVDDSKKLAIEQAMSQIEKQFGKGSIMKLGSDSAKQTVQVIPSGSLDLDIALGIGGYPIGRIVEIYGPESSGKTTLTLSAIAEAQKRGGVAAFIDAEHALDPSYAKKLGVNIDELLVSQPDNGEEALEICESLVRSNAIDLIVIDSVAALVPKAEIEGDMGDSHMGLQARLMSQALRKLTGTIAKSKTVVIFINQIRMKIGVMFGSPETTTGGNALKFYCSVRLDIRKIETIKEKEESVGNRVRVKVVKNKCAPPFKQAEFDIIFNAGISREGSLVDLGVKHDIIHKAGAWYSYNTEKIGQGKEAAKEYLKNNPEIALTIENMVRDLNSLPLLVQENNKKSRKEEKLEQAAG</sequence>
<name>RECA_LEPIN</name>
<keyword id="KW-0067">ATP-binding</keyword>
<keyword id="KW-0963">Cytoplasm</keyword>
<keyword id="KW-0227">DNA damage</keyword>
<keyword id="KW-0233">DNA recombination</keyword>
<keyword id="KW-0234">DNA repair</keyword>
<keyword id="KW-0238">DNA-binding</keyword>
<keyword id="KW-0547">Nucleotide-binding</keyword>
<keyword id="KW-1185">Reference proteome</keyword>
<keyword id="KW-0742">SOS response</keyword>
<gene>
    <name evidence="1" type="primary">recA</name>
    <name type="ordered locus">LA_2179</name>
</gene>
<evidence type="ECO:0000255" key="1">
    <source>
        <dbReference type="HAMAP-Rule" id="MF_00268"/>
    </source>
</evidence>
<evidence type="ECO:0000305" key="2"/>
<accession>P52277</accession>
<feature type="chain" id="PRO_0000122744" description="Protein RecA">
    <location>
        <begin position="1"/>
        <end position="366"/>
    </location>
</feature>
<feature type="binding site" evidence="1">
    <location>
        <begin position="81"/>
        <end position="88"/>
    </location>
    <ligand>
        <name>ATP</name>
        <dbReference type="ChEBI" id="CHEBI:30616"/>
    </ligand>
</feature>
<feature type="sequence conflict" description="In Ref. 1; AAA98505." evidence="2" ref="1">
    <original>A</original>
    <variation>G</variation>
    <location>
        <position position="110"/>
    </location>
</feature>
<feature type="sequence conflict" description="In Ref. 1; AAA98505." evidence="2" ref="1">
    <original>IKEKEESVGNRVRVK</original>
    <variation>TTEKDRICRNRDESN</variation>
    <location>
        <begin position="246"/>
        <end position="260"/>
    </location>
</feature>
<feature type="sequence conflict" description="In Ref. 1; AAA98505." evidence="2" ref="1">
    <original>CA</original>
    <variation>SCP</variation>
    <location>
        <begin position="266"/>
        <end position="267"/>
    </location>
</feature>
<feature type="sequence conflict" description="In Ref. 1; AAA98505." evidence="2" ref="1">
    <original>Q</original>
    <variation>P</variation>
    <location>
        <position position="272"/>
    </location>
</feature>
<feature type="sequence conflict" description="In Ref. 1; AAA98505." evidence="2" ref="1">
    <original>N</original>
    <variation>NH</variation>
    <location>
        <position position="280"/>
    </location>
</feature>
<feature type="sequence conflict" description="In Ref. 1; AAA98505." evidence="2" ref="1">
    <original>E</original>
    <variation>AS</variation>
    <location>
        <position position="318"/>
    </location>
</feature>
<feature type="sequence conflict" description="In Ref. 1; AAA98505." evidence="2" ref="1">
    <original>NPEIA</original>
    <variation>KTLKLT</variation>
    <location>
        <begin position="327"/>
        <end position="331"/>
    </location>
</feature>
<feature type="sequence conflict" description="In Ref. 1; AAA98505." evidence="2" ref="1">
    <original>PLLVQENNKKSRKEEKLEQAAG</original>
    <variation>TFVSSGK</variation>
    <location>
        <begin position="345"/>
        <end position="366"/>
    </location>
</feature>
<comment type="function">
    <text evidence="1">Can catalyze the hydrolysis of ATP in the presence of single-stranded DNA, the ATP-dependent uptake of single-stranded DNA by duplex DNA, and the ATP-dependent hybridization of homologous single-stranded DNAs. It interacts with LexA causing its activation and leading to its autocatalytic cleavage.</text>
</comment>
<comment type="subcellular location">
    <subcellularLocation>
        <location evidence="1">Cytoplasm</location>
    </subcellularLocation>
</comment>
<comment type="similarity">
    <text evidence="1">Belongs to the RecA family.</text>
</comment>
<reference key="1">
    <citation type="submission" date="1996-01" db="EMBL/GenBank/DDBJ databases">
        <authorList>
            <person name="Yelton D.B."/>
            <person name="Salvitti J.A."/>
        </authorList>
    </citation>
    <scope>NUCLEOTIDE SEQUENCE [GENOMIC DNA]</scope>
    <source>
        <strain>Kenniwicki / Serogroup Pomona / Serovar pomona</strain>
    </source>
</reference>
<reference key="2">
    <citation type="journal article" date="2003" name="Nature">
        <title>Unique physiological and pathogenic features of Leptospira interrogans revealed by whole-genome sequencing.</title>
        <authorList>
            <person name="Ren S.-X."/>
            <person name="Fu G."/>
            <person name="Jiang X.-G."/>
            <person name="Zeng R."/>
            <person name="Miao Y.-G."/>
            <person name="Xu H."/>
            <person name="Zhang Y.-X."/>
            <person name="Xiong H."/>
            <person name="Lu G."/>
            <person name="Lu L.-F."/>
            <person name="Jiang H.-Q."/>
            <person name="Jia J."/>
            <person name="Tu Y.-F."/>
            <person name="Jiang J.-X."/>
            <person name="Gu W.-Y."/>
            <person name="Zhang Y.-Q."/>
            <person name="Cai Z."/>
            <person name="Sheng H.-H."/>
            <person name="Yin H.-F."/>
            <person name="Zhang Y."/>
            <person name="Zhu G.-F."/>
            <person name="Wan M."/>
            <person name="Huang H.-L."/>
            <person name="Qian Z."/>
            <person name="Wang S.-Y."/>
            <person name="Ma W."/>
            <person name="Yao Z.-J."/>
            <person name="Shen Y."/>
            <person name="Qiang B.-Q."/>
            <person name="Xia Q.-C."/>
            <person name="Guo X.-K."/>
            <person name="Danchin A."/>
            <person name="Saint Girons I."/>
            <person name="Somerville R.L."/>
            <person name="Wen Y.-M."/>
            <person name="Shi M.-H."/>
            <person name="Chen Z."/>
            <person name="Xu J.-G."/>
            <person name="Zhao G.-P."/>
        </authorList>
    </citation>
    <scope>NUCLEOTIDE SEQUENCE [LARGE SCALE GENOMIC DNA]</scope>
    <source>
        <strain>56601</strain>
    </source>
</reference>
<organism>
    <name type="scientific">Leptospira interrogans serogroup Icterohaemorrhagiae serovar Lai (strain 56601)</name>
    <dbReference type="NCBI Taxonomy" id="189518"/>
    <lineage>
        <taxon>Bacteria</taxon>
        <taxon>Pseudomonadati</taxon>
        <taxon>Spirochaetota</taxon>
        <taxon>Spirochaetia</taxon>
        <taxon>Leptospirales</taxon>
        <taxon>Leptospiraceae</taxon>
        <taxon>Leptospira</taxon>
    </lineage>
</organism>
<dbReference type="EMBL" id="U29169">
    <property type="protein sequence ID" value="AAA98505.1"/>
    <property type="molecule type" value="Genomic_DNA"/>
</dbReference>
<dbReference type="EMBL" id="AE010300">
    <property type="protein sequence ID" value="AAN49378.1"/>
    <property type="molecule type" value="Genomic_DNA"/>
</dbReference>
<dbReference type="RefSeq" id="NP_712360.1">
    <property type="nucleotide sequence ID" value="NC_004342.2"/>
</dbReference>
<dbReference type="RefSeq" id="WP_000504720.1">
    <property type="nucleotide sequence ID" value="NC_004342.2"/>
</dbReference>
<dbReference type="SMR" id="P52277"/>
<dbReference type="FunCoup" id="P52277">
    <property type="interactions" value="438"/>
</dbReference>
<dbReference type="STRING" id="189518.LA_2179"/>
<dbReference type="PaxDb" id="189518-LA_2179"/>
<dbReference type="EnsemblBacteria" id="AAN49378">
    <property type="protein sequence ID" value="AAN49378"/>
    <property type="gene ID" value="LA_2179"/>
</dbReference>
<dbReference type="GeneID" id="61141643"/>
<dbReference type="KEGG" id="lil:LA_2179"/>
<dbReference type="PATRIC" id="fig|189518.3.peg.2171"/>
<dbReference type="HOGENOM" id="CLU_040469_3_2_12"/>
<dbReference type="InParanoid" id="P52277"/>
<dbReference type="OrthoDB" id="9776733at2"/>
<dbReference type="Proteomes" id="UP000001408">
    <property type="component" value="Chromosome I"/>
</dbReference>
<dbReference type="GO" id="GO:0005737">
    <property type="term" value="C:cytoplasm"/>
    <property type="evidence" value="ECO:0007669"/>
    <property type="project" value="UniProtKB-SubCell"/>
</dbReference>
<dbReference type="GO" id="GO:0005524">
    <property type="term" value="F:ATP binding"/>
    <property type="evidence" value="ECO:0007669"/>
    <property type="project" value="UniProtKB-UniRule"/>
</dbReference>
<dbReference type="GO" id="GO:0016887">
    <property type="term" value="F:ATP hydrolysis activity"/>
    <property type="evidence" value="ECO:0007669"/>
    <property type="project" value="InterPro"/>
</dbReference>
<dbReference type="GO" id="GO:0140664">
    <property type="term" value="F:ATP-dependent DNA damage sensor activity"/>
    <property type="evidence" value="ECO:0007669"/>
    <property type="project" value="InterPro"/>
</dbReference>
<dbReference type="GO" id="GO:0003684">
    <property type="term" value="F:damaged DNA binding"/>
    <property type="evidence" value="ECO:0007669"/>
    <property type="project" value="UniProtKB-UniRule"/>
</dbReference>
<dbReference type="GO" id="GO:0003697">
    <property type="term" value="F:single-stranded DNA binding"/>
    <property type="evidence" value="ECO:0007669"/>
    <property type="project" value="UniProtKB-UniRule"/>
</dbReference>
<dbReference type="GO" id="GO:0006310">
    <property type="term" value="P:DNA recombination"/>
    <property type="evidence" value="ECO:0007669"/>
    <property type="project" value="UniProtKB-UniRule"/>
</dbReference>
<dbReference type="GO" id="GO:0006281">
    <property type="term" value="P:DNA repair"/>
    <property type="evidence" value="ECO:0007669"/>
    <property type="project" value="UniProtKB-UniRule"/>
</dbReference>
<dbReference type="GO" id="GO:0009432">
    <property type="term" value="P:SOS response"/>
    <property type="evidence" value="ECO:0007669"/>
    <property type="project" value="UniProtKB-UniRule"/>
</dbReference>
<dbReference type="CDD" id="cd00983">
    <property type="entry name" value="RecA"/>
    <property type="match status" value="1"/>
</dbReference>
<dbReference type="FunFam" id="3.40.50.300:FF:000087">
    <property type="entry name" value="Recombinase RecA"/>
    <property type="match status" value="1"/>
</dbReference>
<dbReference type="Gene3D" id="3.40.50.300">
    <property type="entry name" value="P-loop containing nucleotide triphosphate hydrolases"/>
    <property type="match status" value="1"/>
</dbReference>
<dbReference type="HAMAP" id="MF_00268">
    <property type="entry name" value="RecA"/>
    <property type="match status" value="1"/>
</dbReference>
<dbReference type="InterPro" id="IPR003593">
    <property type="entry name" value="AAA+_ATPase"/>
</dbReference>
<dbReference type="InterPro" id="IPR013765">
    <property type="entry name" value="DNA_recomb/repair_RecA"/>
</dbReference>
<dbReference type="InterPro" id="IPR027417">
    <property type="entry name" value="P-loop_NTPase"/>
</dbReference>
<dbReference type="InterPro" id="IPR049261">
    <property type="entry name" value="RecA-like_C"/>
</dbReference>
<dbReference type="InterPro" id="IPR049428">
    <property type="entry name" value="RecA-like_N"/>
</dbReference>
<dbReference type="InterPro" id="IPR020588">
    <property type="entry name" value="RecA_ATP-bd"/>
</dbReference>
<dbReference type="InterPro" id="IPR023400">
    <property type="entry name" value="RecA_C_sf"/>
</dbReference>
<dbReference type="InterPro" id="IPR020587">
    <property type="entry name" value="RecA_monomer-monomer_interface"/>
</dbReference>
<dbReference type="NCBIfam" id="TIGR02012">
    <property type="entry name" value="tigrfam_recA"/>
    <property type="match status" value="1"/>
</dbReference>
<dbReference type="PANTHER" id="PTHR45900:SF1">
    <property type="entry name" value="MITOCHONDRIAL DNA REPAIR PROTEIN RECA HOMOLOG-RELATED"/>
    <property type="match status" value="1"/>
</dbReference>
<dbReference type="PANTHER" id="PTHR45900">
    <property type="entry name" value="RECA"/>
    <property type="match status" value="1"/>
</dbReference>
<dbReference type="Pfam" id="PF00154">
    <property type="entry name" value="RecA"/>
    <property type="match status" value="1"/>
</dbReference>
<dbReference type="Pfam" id="PF21096">
    <property type="entry name" value="RecA_C"/>
    <property type="match status" value="1"/>
</dbReference>
<dbReference type="PRINTS" id="PR00142">
    <property type="entry name" value="RECA"/>
</dbReference>
<dbReference type="SMART" id="SM00382">
    <property type="entry name" value="AAA"/>
    <property type="match status" value="1"/>
</dbReference>
<dbReference type="SUPFAM" id="SSF52540">
    <property type="entry name" value="P-loop containing nucleoside triphosphate hydrolases"/>
    <property type="match status" value="1"/>
</dbReference>
<dbReference type="SUPFAM" id="SSF54752">
    <property type="entry name" value="RecA protein, C-terminal domain"/>
    <property type="match status" value="1"/>
</dbReference>
<dbReference type="PROSITE" id="PS50162">
    <property type="entry name" value="RECA_2"/>
    <property type="match status" value="1"/>
</dbReference>
<dbReference type="PROSITE" id="PS50163">
    <property type="entry name" value="RECA_3"/>
    <property type="match status" value="1"/>
</dbReference>
<protein>
    <recommendedName>
        <fullName evidence="1">Protein RecA</fullName>
    </recommendedName>
    <alternativeName>
        <fullName evidence="1">Recombinase A</fullName>
    </alternativeName>
</protein>
<proteinExistence type="inferred from homology"/>